<reference key="1">
    <citation type="journal article" date="2004" name="Nat. Genet.">
        <title>Complete sequencing and characterization of 21,243 full-length human cDNAs.</title>
        <authorList>
            <person name="Ota T."/>
            <person name="Suzuki Y."/>
            <person name="Nishikawa T."/>
            <person name="Otsuki T."/>
            <person name="Sugiyama T."/>
            <person name="Irie R."/>
            <person name="Wakamatsu A."/>
            <person name="Hayashi K."/>
            <person name="Sato H."/>
            <person name="Nagai K."/>
            <person name="Kimura K."/>
            <person name="Makita H."/>
            <person name="Sekine M."/>
            <person name="Obayashi M."/>
            <person name="Nishi T."/>
            <person name="Shibahara T."/>
            <person name="Tanaka T."/>
            <person name="Ishii S."/>
            <person name="Yamamoto J."/>
            <person name="Saito K."/>
            <person name="Kawai Y."/>
            <person name="Isono Y."/>
            <person name="Nakamura Y."/>
            <person name="Nagahari K."/>
            <person name="Murakami K."/>
            <person name="Yasuda T."/>
            <person name="Iwayanagi T."/>
            <person name="Wagatsuma M."/>
            <person name="Shiratori A."/>
            <person name="Sudo H."/>
            <person name="Hosoiri T."/>
            <person name="Kaku Y."/>
            <person name="Kodaira H."/>
            <person name="Kondo H."/>
            <person name="Sugawara M."/>
            <person name="Takahashi M."/>
            <person name="Kanda K."/>
            <person name="Yokoi T."/>
            <person name="Furuya T."/>
            <person name="Kikkawa E."/>
            <person name="Omura Y."/>
            <person name="Abe K."/>
            <person name="Kamihara K."/>
            <person name="Katsuta N."/>
            <person name="Sato K."/>
            <person name="Tanikawa M."/>
            <person name="Yamazaki M."/>
            <person name="Ninomiya K."/>
            <person name="Ishibashi T."/>
            <person name="Yamashita H."/>
            <person name="Murakawa K."/>
            <person name="Fujimori K."/>
            <person name="Tanai H."/>
            <person name="Kimata M."/>
            <person name="Watanabe M."/>
            <person name="Hiraoka S."/>
            <person name="Chiba Y."/>
            <person name="Ishida S."/>
            <person name="Ono Y."/>
            <person name="Takiguchi S."/>
            <person name="Watanabe S."/>
            <person name="Yosida M."/>
            <person name="Hotuta T."/>
            <person name="Kusano J."/>
            <person name="Kanehori K."/>
            <person name="Takahashi-Fujii A."/>
            <person name="Hara H."/>
            <person name="Tanase T.-O."/>
            <person name="Nomura Y."/>
            <person name="Togiya S."/>
            <person name="Komai F."/>
            <person name="Hara R."/>
            <person name="Takeuchi K."/>
            <person name="Arita M."/>
            <person name="Imose N."/>
            <person name="Musashino K."/>
            <person name="Yuuki H."/>
            <person name="Oshima A."/>
            <person name="Sasaki N."/>
            <person name="Aotsuka S."/>
            <person name="Yoshikawa Y."/>
            <person name="Matsunawa H."/>
            <person name="Ichihara T."/>
            <person name="Shiohata N."/>
            <person name="Sano S."/>
            <person name="Moriya S."/>
            <person name="Momiyama H."/>
            <person name="Satoh N."/>
            <person name="Takami S."/>
            <person name="Terashima Y."/>
            <person name="Suzuki O."/>
            <person name="Nakagawa S."/>
            <person name="Senoh A."/>
            <person name="Mizoguchi H."/>
            <person name="Goto Y."/>
            <person name="Shimizu F."/>
            <person name="Wakebe H."/>
            <person name="Hishigaki H."/>
            <person name="Watanabe T."/>
            <person name="Sugiyama A."/>
            <person name="Takemoto M."/>
            <person name="Kawakami B."/>
            <person name="Yamazaki M."/>
            <person name="Watanabe K."/>
            <person name="Kumagai A."/>
            <person name="Itakura S."/>
            <person name="Fukuzumi Y."/>
            <person name="Fujimori Y."/>
            <person name="Komiyama M."/>
            <person name="Tashiro H."/>
            <person name="Tanigami A."/>
            <person name="Fujiwara T."/>
            <person name="Ono T."/>
            <person name="Yamada K."/>
            <person name="Fujii Y."/>
            <person name="Ozaki K."/>
            <person name="Hirao M."/>
            <person name="Ohmori Y."/>
            <person name="Kawabata A."/>
            <person name="Hikiji T."/>
            <person name="Kobatake N."/>
            <person name="Inagaki H."/>
            <person name="Ikema Y."/>
            <person name="Okamoto S."/>
            <person name="Okitani R."/>
            <person name="Kawakami T."/>
            <person name="Noguchi S."/>
            <person name="Itoh T."/>
            <person name="Shigeta K."/>
            <person name="Senba T."/>
            <person name="Matsumura K."/>
            <person name="Nakajima Y."/>
            <person name="Mizuno T."/>
            <person name="Morinaga M."/>
            <person name="Sasaki M."/>
            <person name="Togashi T."/>
            <person name="Oyama M."/>
            <person name="Hata H."/>
            <person name="Watanabe M."/>
            <person name="Komatsu T."/>
            <person name="Mizushima-Sugano J."/>
            <person name="Satoh T."/>
            <person name="Shirai Y."/>
            <person name="Takahashi Y."/>
            <person name="Nakagawa K."/>
            <person name="Okumura K."/>
            <person name="Nagase T."/>
            <person name="Nomura N."/>
            <person name="Kikuchi H."/>
            <person name="Masuho Y."/>
            <person name="Yamashita R."/>
            <person name="Nakai K."/>
            <person name="Yada T."/>
            <person name="Nakamura Y."/>
            <person name="Ohara O."/>
            <person name="Isogai T."/>
            <person name="Sugano S."/>
        </authorList>
    </citation>
    <scope>NUCLEOTIDE SEQUENCE [LARGE SCALE MRNA] (ISOFORMS 2 AND 3)</scope>
    <source>
        <tissue>Mammary gland</tissue>
        <tissue>Small intestine</tissue>
    </source>
</reference>
<reference key="2">
    <citation type="journal article" date="2004" name="Nature">
        <title>The DNA sequence and biology of human chromosome 19.</title>
        <authorList>
            <person name="Grimwood J."/>
            <person name="Gordon L.A."/>
            <person name="Olsen A.S."/>
            <person name="Terry A."/>
            <person name="Schmutz J."/>
            <person name="Lamerdin J.E."/>
            <person name="Hellsten U."/>
            <person name="Goodstein D."/>
            <person name="Couronne O."/>
            <person name="Tran-Gyamfi M."/>
            <person name="Aerts A."/>
            <person name="Altherr M."/>
            <person name="Ashworth L."/>
            <person name="Bajorek E."/>
            <person name="Black S."/>
            <person name="Branscomb E."/>
            <person name="Caenepeel S."/>
            <person name="Carrano A.V."/>
            <person name="Caoile C."/>
            <person name="Chan Y.M."/>
            <person name="Christensen M."/>
            <person name="Cleland C.A."/>
            <person name="Copeland A."/>
            <person name="Dalin E."/>
            <person name="Dehal P."/>
            <person name="Denys M."/>
            <person name="Detter J.C."/>
            <person name="Escobar J."/>
            <person name="Flowers D."/>
            <person name="Fotopulos D."/>
            <person name="Garcia C."/>
            <person name="Georgescu A.M."/>
            <person name="Glavina T."/>
            <person name="Gomez M."/>
            <person name="Gonzales E."/>
            <person name="Groza M."/>
            <person name="Hammon N."/>
            <person name="Hawkins T."/>
            <person name="Haydu L."/>
            <person name="Ho I."/>
            <person name="Huang W."/>
            <person name="Israni S."/>
            <person name="Jett J."/>
            <person name="Kadner K."/>
            <person name="Kimball H."/>
            <person name="Kobayashi A."/>
            <person name="Larionov V."/>
            <person name="Leem S.-H."/>
            <person name="Lopez F."/>
            <person name="Lou Y."/>
            <person name="Lowry S."/>
            <person name="Malfatti S."/>
            <person name="Martinez D."/>
            <person name="McCready P.M."/>
            <person name="Medina C."/>
            <person name="Morgan J."/>
            <person name="Nelson K."/>
            <person name="Nolan M."/>
            <person name="Ovcharenko I."/>
            <person name="Pitluck S."/>
            <person name="Pollard M."/>
            <person name="Popkie A.P."/>
            <person name="Predki P."/>
            <person name="Quan G."/>
            <person name="Ramirez L."/>
            <person name="Rash S."/>
            <person name="Retterer J."/>
            <person name="Rodriguez A."/>
            <person name="Rogers S."/>
            <person name="Salamov A."/>
            <person name="Salazar A."/>
            <person name="She X."/>
            <person name="Smith D."/>
            <person name="Slezak T."/>
            <person name="Solovyev V."/>
            <person name="Thayer N."/>
            <person name="Tice H."/>
            <person name="Tsai M."/>
            <person name="Ustaszewska A."/>
            <person name="Vo N."/>
            <person name="Wagner M."/>
            <person name="Wheeler J."/>
            <person name="Wu K."/>
            <person name="Xie G."/>
            <person name="Yang J."/>
            <person name="Dubchak I."/>
            <person name="Furey T.S."/>
            <person name="DeJong P."/>
            <person name="Dickson M."/>
            <person name="Gordon D."/>
            <person name="Eichler E.E."/>
            <person name="Pennacchio L.A."/>
            <person name="Richardson P."/>
            <person name="Stubbs L."/>
            <person name="Rokhsar D.S."/>
            <person name="Myers R.M."/>
            <person name="Rubin E.M."/>
            <person name="Lucas S.M."/>
        </authorList>
    </citation>
    <scope>NUCLEOTIDE SEQUENCE [LARGE SCALE GENOMIC DNA]</scope>
</reference>
<reference key="3">
    <citation type="submission" date="2005-07" db="EMBL/GenBank/DDBJ databases">
        <authorList>
            <person name="Mural R.J."/>
            <person name="Istrail S."/>
            <person name="Sutton G.G."/>
            <person name="Florea L."/>
            <person name="Halpern A.L."/>
            <person name="Mobarry C.M."/>
            <person name="Lippert R."/>
            <person name="Walenz B."/>
            <person name="Shatkay H."/>
            <person name="Dew I."/>
            <person name="Miller J.R."/>
            <person name="Flanigan M.J."/>
            <person name="Edwards N.J."/>
            <person name="Bolanos R."/>
            <person name="Fasulo D."/>
            <person name="Halldorsson B.V."/>
            <person name="Hannenhalli S."/>
            <person name="Turner R."/>
            <person name="Yooseph S."/>
            <person name="Lu F."/>
            <person name="Nusskern D.R."/>
            <person name="Shue B.C."/>
            <person name="Zheng X.H."/>
            <person name="Zhong F."/>
            <person name="Delcher A.L."/>
            <person name="Huson D.H."/>
            <person name="Kravitz S.A."/>
            <person name="Mouchard L."/>
            <person name="Reinert K."/>
            <person name="Remington K.A."/>
            <person name="Clark A.G."/>
            <person name="Waterman M.S."/>
            <person name="Eichler E.E."/>
            <person name="Adams M.D."/>
            <person name="Hunkapiller M.W."/>
            <person name="Myers E.W."/>
            <person name="Venter J.C."/>
        </authorList>
    </citation>
    <scope>NUCLEOTIDE SEQUENCE [LARGE SCALE GENOMIC DNA]</scope>
</reference>
<reference key="4">
    <citation type="journal article" date="2004" name="Genome Res.">
        <title>The status, quality, and expansion of the NIH full-length cDNA project: the Mammalian Gene Collection (MGC).</title>
        <authorList>
            <consortium name="The MGC Project Team"/>
        </authorList>
    </citation>
    <scope>NUCLEOTIDE SEQUENCE [LARGE SCALE MRNA] (ISOFORM 1)</scope>
    <source>
        <tissue>Placenta</tissue>
    </source>
</reference>
<gene>
    <name type="primary">PODNL1</name>
    <name type="synonym">SLRR5B</name>
</gene>
<protein>
    <recommendedName>
        <fullName>Podocan-like protein 1</fullName>
    </recommendedName>
</protein>
<accession>Q6PEZ8</accession>
<accession>B7Z564</accession>
<accession>Q9H5G9</accession>
<evidence type="ECO:0000250" key="1">
    <source>
        <dbReference type="UniProtKB" id="Q6P3Y9"/>
    </source>
</evidence>
<evidence type="ECO:0000255" key="2"/>
<evidence type="ECO:0000303" key="3">
    <source>
    </source>
</evidence>
<evidence type="ECO:0000305" key="4"/>
<feature type="signal peptide" evidence="2">
    <location>
        <begin position="1"/>
        <end position="26"/>
    </location>
</feature>
<feature type="chain" id="PRO_0000311187" description="Podocan-like protein 1">
    <location>
        <begin position="27"/>
        <end position="512"/>
    </location>
</feature>
<feature type="domain" description="LRRNT">
    <location>
        <begin position="37"/>
        <end position="74"/>
    </location>
</feature>
<feature type="repeat" description="LRR 1">
    <location>
        <begin position="75"/>
        <end position="96"/>
    </location>
</feature>
<feature type="repeat" description="LRR 2">
    <location>
        <begin position="99"/>
        <end position="119"/>
    </location>
</feature>
<feature type="repeat" description="LRR 3">
    <location>
        <begin position="125"/>
        <end position="146"/>
    </location>
</feature>
<feature type="repeat" description="LRR 4">
    <location>
        <begin position="147"/>
        <end position="167"/>
    </location>
</feature>
<feature type="repeat" description="LRR 5">
    <location>
        <begin position="170"/>
        <end position="193"/>
    </location>
</feature>
<feature type="repeat" description="LRR 6">
    <location>
        <begin position="196"/>
        <end position="216"/>
    </location>
</feature>
<feature type="repeat" description="LRR 7">
    <location>
        <begin position="217"/>
        <end position="238"/>
    </location>
</feature>
<feature type="repeat" description="LRR 8">
    <location>
        <begin position="241"/>
        <end position="261"/>
    </location>
</feature>
<feature type="repeat" description="LRR 9">
    <location>
        <begin position="267"/>
        <end position="288"/>
    </location>
</feature>
<feature type="repeat" description="LRR 10">
    <location>
        <begin position="289"/>
        <end position="309"/>
    </location>
</feature>
<feature type="repeat" description="LRR 11">
    <location>
        <begin position="312"/>
        <end position="332"/>
    </location>
</feature>
<feature type="repeat" description="LRR 12">
    <location>
        <begin position="338"/>
        <end position="359"/>
    </location>
</feature>
<feature type="repeat" description="LRR 13">
    <location>
        <begin position="360"/>
        <end position="380"/>
    </location>
</feature>
<feature type="repeat" description="LRR 14">
    <location>
        <begin position="383"/>
        <end position="396"/>
    </location>
</feature>
<feature type="repeat" description="LRR 15">
    <location>
        <begin position="409"/>
        <end position="430"/>
    </location>
</feature>
<feature type="repeat" description="LRR 16">
    <location>
        <begin position="431"/>
        <end position="451"/>
    </location>
</feature>
<feature type="repeat" description="LRR 17">
    <location>
        <begin position="454"/>
        <end position="474"/>
    </location>
</feature>
<feature type="glycosylation site" description="N-linked (GlcNAc...) asparagine" evidence="2">
    <location>
        <position position="71"/>
    </location>
</feature>
<feature type="splice variant" id="VSP_043973" description="In isoform 2 and isoform 3." evidence="3">
    <original>MAESGLAM</original>
    <variation>MGRPTQ</variation>
    <location>
        <begin position="1"/>
        <end position="8"/>
    </location>
</feature>
<feature type="splice variant" id="VSP_043974" description="In isoform 2." evidence="3">
    <location>
        <begin position="136"/>
        <end position="224"/>
    </location>
</feature>
<feature type="sequence variant" id="VAR_037151" description="In dbSNP:rs3745467.">
    <original>R</original>
    <variation>W</variation>
    <location>
        <position position="44"/>
    </location>
</feature>
<feature type="sequence conflict" description="In Ref. 1; BAH12800." evidence="4" ref="1">
    <original>L</original>
    <variation>P</variation>
    <location>
        <position position="17"/>
    </location>
</feature>
<feature type="sequence conflict" description="In Ref. 3; AAH57786." evidence="4" ref="3">
    <original>P</original>
    <variation>L</variation>
    <location>
        <position position="43"/>
    </location>
</feature>
<feature type="sequence conflict" description="In Ref. 1; BAH12800." evidence="4" ref="1">
    <original>P</original>
    <variation>S</variation>
    <location>
        <position position="212"/>
    </location>
</feature>
<keyword id="KW-0025">Alternative splicing</keyword>
<keyword id="KW-0272">Extracellular matrix</keyword>
<keyword id="KW-0325">Glycoprotein</keyword>
<keyword id="KW-0433">Leucine-rich repeat</keyword>
<keyword id="KW-1267">Proteomics identification</keyword>
<keyword id="KW-1185">Reference proteome</keyword>
<keyword id="KW-0677">Repeat</keyword>
<keyword id="KW-0964">Secreted</keyword>
<keyword id="KW-0732">Signal</keyword>
<organism>
    <name type="scientific">Homo sapiens</name>
    <name type="common">Human</name>
    <dbReference type="NCBI Taxonomy" id="9606"/>
    <lineage>
        <taxon>Eukaryota</taxon>
        <taxon>Metazoa</taxon>
        <taxon>Chordata</taxon>
        <taxon>Craniata</taxon>
        <taxon>Vertebrata</taxon>
        <taxon>Euteleostomi</taxon>
        <taxon>Mammalia</taxon>
        <taxon>Eutheria</taxon>
        <taxon>Euarchontoglires</taxon>
        <taxon>Primates</taxon>
        <taxon>Haplorrhini</taxon>
        <taxon>Catarrhini</taxon>
        <taxon>Hominidae</taxon>
        <taxon>Homo</taxon>
    </lineage>
</organism>
<comment type="subcellular location">
    <subcellularLocation>
        <location evidence="1">Secreted</location>
        <location evidence="1">Extracellular space</location>
        <location evidence="1">Extracellular matrix</location>
    </subcellularLocation>
</comment>
<comment type="alternative products">
    <event type="alternative splicing"/>
    <isoform>
        <id>Q6PEZ8-1</id>
        <name>1</name>
        <sequence type="displayed"/>
    </isoform>
    <isoform>
        <id>Q6PEZ8-2</id>
        <name>2</name>
        <sequence type="described" ref="VSP_043973 VSP_043974"/>
    </isoform>
    <isoform>
        <id>Q6PEZ8-3</id>
        <name>3</name>
        <sequence type="described" ref="VSP_043973"/>
    </isoform>
</comment>
<comment type="PTM">
    <text evidence="1">N-glycosylated.</text>
</comment>
<comment type="similarity">
    <text evidence="4">Belongs to the small leucine-rich proteoglycan (SLRP) family. SLRP class V subfamily.</text>
</comment>
<comment type="sequence caution" evidence="4">
    <conflict type="erroneous translation">
        <sequence resource="EMBL-CDS" id="BAB15657"/>
    </conflict>
    <text>Wrong choice of frame.</text>
</comment>
<sequence length="512" mass="56539">MAESGLAMWPSLLLLLLLPGPPPVAGLEDAAFPHLGESLQPLPRACPLRCSCPRVDTVDCDGLDLRVFPDNITRAAQHLSLQNNQLQELPYNELSRLSGLRTLNLHNNLISSEGLPDEAFESLTQLQHLCVAHNKLSVAPQFLPRSLRVADLAANQVMEIFPLTFGEKPALRSVYLHNNQLSNAGLPPDAFRGSEAIATLSLSNNQLSYLPPSLPPSLERLHLQNNLISKVPRGALSRQTQLRELYLQHNQLTDSGLDATTFSKLHSLEYLDLSHNQLTTVPAGLPRTLAILHLGRNRIRQVEAARLHGARGLRYLLLQHNQLGSSGLPAGALRPLRGLHTLHLYGNGLDRVPPALPRRLRALVLPHNHVAALGARDLVATPGLTELNLAYNRLASARVHHRAFRRLRALRSLDLAGNQLTRLPMGLPTGLRTLQLQRNQLRMLEPEPLAGLDQLRELSLAHNRLRVGDIGPGTWHELQALQVRHRLVSHTVPRAPPSPCLPCHVPNILVSW</sequence>
<name>PONL1_HUMAN</name>
<proteinExistence type="evidence at protein level"/>
<dbReference type="EMBL" id="AK027100">
    <property type="protein sequence ID" value="BAB15657.1"/>
    <property type="status" value="ALT_SEQ"/>
    <property type="molecule type" value="mRNA"/>
</dbReference>
<dbReference type="EMBL" id="AK298489">
    <property type="protein sequence ID" value="BAH12800.1"/>
    <property type="molecule type" value="mRNA"/>
</dbReference>
<dbReference type="EMBL" id="AC020916">
    <property type="status" value="NOT_ANNOTATED_CDS"/>
    <property type="molecule type" value="Genomic_DNA"/>
</dbReference>
<dbReference type="EMBL" id="CH471106">
    <property type="protein sequence ID" value="EAW84381.1"/>
    <property type="molecule type" value="Genomic_DNA"/>
</dbReference>
<dbReference type="EMBL" id="BC057786">
    <property type="protein sequence ID" value="AAH57786.1"/>
    <property type="molecule type" value="mRNA"/>
</dbReference>
<dbReference type="CCDS" id="CCDS54225.1">
    <molecule id="Q6PEZ8-2"/>
</dbReference>
<dbReference type="CCDS" id="CCDS54226.1">
    <molecule id="Q6PEZ8-3"/>
</dbReference>
<dbReference type="RefSeq" id="NP_001139726.1">
    <molecule id="Q6PEZ8-3"/>
    <property type="nucleotide sequence ID" value="NM_001146254.2"/>
</dbReference>
<dbReference type="RefSeq" id="NP_001139727.1">
    <molecule id="Q6PEZ8-2"/>
    <property type="nucleotide sequence ID" value="NM_001146255.2"/>
</dbReference>
<dbReference type="RefSeq" id="NP_079101.3">
    <property type="nucleotide sequence ID" value="NM_024825.3"/>
</dbReference>
<dbReference type="SMR" id="Q6PEZ8"/>
<dbReference type="BioGRID" id="122968">
    <property type="interactions" value="11"/>
</dbReference>
<dbReference type="FunCoup" id="Q6PEZ8">
    <property type="interactions" value="65"/>
</dbReference>
<dbReference type="STRING" id="9606.ENSP00000442553"/>
<dbReference type="GlyCosmos" id="Q6PEZ8">
    <property type="glycosylation" value="1 site, No reported glycans"/>
</dbReference>
<dbReference type="GlyGen" id="Q6PEZ8">
    <property type="glycosylation" value="2 sites, 1 O-linked glycan (1 site)"/>
</dbReference>
<dbReference type="iPTMnet" id="Q6PEZ8"/>
<dbReference type="PhosphoSitePlus" id="Q6PEZ8"/>
<dbReference type="BioMuta" id="PODNL1"/>
<dbReference type="DMDM" id="296452863"/>
<dbReference type="jPOST" id="Q6PEZ8"/>
<dbReference type="MassIVE" id="Q6PEZ8"/>
<dbReference type="PaxDb" id="9606-ENSP00000345175"/>
<dbReference type="PeptideAtlas" id="Q6PEZ8"/>
<dbReference type="ProteomicsDB" id="67090">
    <molecule id="Q6PEZ8-1"/>
</dbReference>
<dbReference type="ProteomicsDB" id="67091">
    <molecule id="Q6PEZ8-2"/>
</dbReference>
<dbReference type="ProteomicsDB" id="67092">
    <molecule id="Q6PEZ8-3"/>
</dbReference>
<dbReference type="Antibodypedia" id="50255">
    <property type="antibodies" value="69 antibodies from 17 providers"/>
</dbReference>
<dbReference type="DNASU" id="79883"/>
<dbReference type="Ensembl" id="ENST00000538371.6">
    <molecule id="Q6PEZ8-3"/>
    <property type="protein sequence ID" value="ENSP00000442553.1"/>
    <property type="gene ID" value="ENSG00000132000.14"/>
</dbReference>
<dbReference type="Ensembl" id="ENST00000538517.6">
    <molecule id="Q6PEZ8-2"/>
    <property type="protein sequence ID" value="ENSP00000440080.1"/>
    <property type="gene ID" value="ENSG00000132000.14"/>
</dbReference>
<dbReference type="Ensembl" id="ENST00000672131.1">
    <molecule id="Q6PEZ8-2"/>
    <property type="protein sequence ID" value="ENSP00000500144.1"/>
    <property type="gene ID" value="ENSG00000288195.1"/>
</dbReference>
<dbReference type="Ensembl" id="ENST00000672142.1">
    <molecule id="Q6PEZ8-3"/>
    <property type="protein sequence ID" value="ENSP00000499876.1"/>
    <property type="gene ID" value="ENSG00000288195.1"/>
</dbReference>
<dbReference type="GeneID" id="79883"/>
<dbReference type="KEGG" id="hsa:79883"/>
<dbReference type="UCSC" id="uc002mxr.4">
    <molecule id="Q6PEZ8-1"/>
    <property type="organism name" value="human"/>
</dbReference>
<dbReference type="AGR" id="HGNC:26275"/>
<dbReference type="CTD" id="79883"/>
<dbReference type="DisGeNET" id="79883"/>
<dbReference type="GeneCards" id="PODNL1"/>
<dbReference type="HGNC" id="HGNC:26275">
    <property type="gene designation" value="PODNL1"/>
</dbReference>
<dbReference type="HPA" id="ENSG00000132000">
    <property type="expression patterns" value="Low tissue specificity"/>
</dbReference>
<dbReference type="MIM" id="621043">
    <property type="type" value="gene"/>
</dbReference>
<dbReference type="neXtProt" id="NX_Q6PEZ8"/>
<dbReference type="OpenTargets" id="ENSG00000132000"/>
<dbReference type="PharmGKB" id="PA162399855"/>
<dbReference type="VEuPathDB" id="HostDB:ENSG00000132000"/>
<dbReference type="eggNOG" id="KOG0619">
    <property type="taxonomic scope" value="Eukaryota"/>
</dbReference>
<dbReference type="GeneTree" id="ENSGT00940000162059"/>
<dbReference type="HOGENOM" id="CLU_000288_186_3_1"/>
<dbReference type="InParanoid" id="Q6PEZ8"/>
<dbReference type="OrthoDB" id="10027416at2759"/>
<dbReference type="PAN-GO" id="Q6PEZ8">
    <property type="GO annotations" value="1 GO annotation based on evolutionary models"/>
</dbReference>
<dbReference type="PhylomeDB" id="Q6PEZ8"/>
<dbReference type="TreeFam" id="TF336377"/>
<dbReference type="PathwayCommons" id="Q6PEZ8"/>
<dbReference type="BioGRID-ORCS" id="79883">
    <property type="hits" value="15 hits in 1147 CRISPR screens"/>
</dbReference>
<dbReference type="GenomeRNAi" id="79883"/>
<dbReference type="Pharos" id="Q6PEZ8">
    <property type="development level" value="Tdark"/>
</dbReference>
<dbReference type="PRO" id="PR:Q6PEZ8"/>
<dbReference type="Proteomes" id="UP000005640">
    <property type="component" value="Chromosome 19"/>
</dbReference>
<dbReference type="RNAct" id="Q6PEZ8">
    <property type="molecule type" value="protein"/>
</dbReference>
<dbReference type="Bgee" id="ENSG00000132000">
    <property type="expression patterns" value="Expressed in tibial nerve and 91 other cell types or tissues"/>
</dbReference>
<dbReference type="ExpressionAtlas" id="Q6PEZ8">
    <property type="expression patterns" value="baseline and differential"/>
</dbReference>
<dbReference type="GO" id="GO:0062023">
    <property type="term" value="C:collagen-containing extracellular matrix"/>
    <property type="evidence" value="ECO:0007005"/>
    <property type="project" value="GO_Central"/>
</dbReference>
<dbReference type="GO" id="GO:0031012">
    <property type="term" value="C:extracellular matrix"/>
    <property type="evidence" value="ECO:0007005"/>
    <property type="project" value="GO_Central"/>
</dbReference>
<dbReference type="GO" id="GO:0005615">
    <property type="term" value="C:extracellular space"/>
    <property type="evidence" value="ECO:0000318"/>
    <property type="project" value="GO_Central"/>
</dbReference>
<dbReference type="GO" id="GO:0005201">
    <property type="term" value="F:extracellular matrix structural constituent"/>
    <property type="evidence" value="ECO:0007005"/>
    <property type="project" value="GO_Central"/>
</dbReference>
<dbReference type="Gene3D" id="3.80.10.10">
    <property type="entry name" value="Ribonuclease Inhibitor"/>
    <property type="match status" value="4"/>
</dbReference>
<dbReference type="InterPro" id="IPR001611">
    <property type="entry name" value="Leu-rich_rpt"/>
</dbReference>
<dbReference type="InterPro" id="IPR003591">
    <property type="entry name" value="Leu-rich_rpt_typical-subtyp"/>
</dbReference>
<dbReference type="InterPro" id="IPR032675">
    <property type="entry name" value="LRR_dom_sf"/>
</dbReference>
<dbReference type="InterPro" id="IPR050333">
    <property type="entry name" value="SLRP"/>
</dbReference>
<dbReference type="PANTHER" id="PTHR45712">
    <property type="entry name" value="AGAP008170-PA"/>
    <property type="match status" value="1"/>
</dbReference>
<dbReference type="PANTHER" id="PTHR45712:SF22">
    <property type="entry name" value="INSULIN-LIKE GROWTH FACTOR-BINDING PROTEIN COMPLEX ACID LABILE SUBUNIT"/>
    <property type="match status" value="1"/>
</dbReference>
<dbReference type="Pfam" id="PF13855">
    <property type="entry name" value="LRR_8"/>
    <property type="match status" value="5"/>
</dbReference>
<dbReference type="PRINTS" id="PR00019">
    <property type="entry name" value="LEURICHRPT"/>
</dbReference>
<dbReference type="SMART" id="SM00364">
    <property type="entry name" value="LRR_BAC"/>
    <property type="match status" value="7"/>
</dbReference>
<dbReference type="SMART" id="SM00365">
    <property type="entry name" value="LRR_SD22"/>
    <property type="match status" value="6"/>
</dbReference>
<dbReference type="SMART" id="SM00369">
    <property type="entry name" value="LRR_TYP"/>
    <property type="match status" value="13"/>
</dbReference>
<dbReference type="SUPFAM" id="SSF52058">
    <property type="entry name" value="L domain-like"/>
    <property type="match status" value="1"/>
</dbReference>
<dbReference type="SUPFAM" id="SSF52047">
    <property type="entry name" value="RNI-like"/>
    <property type="match status" value="1"/>
</dbReference>
<dbReference type="PROSITE" id="PS51450">
    <property type="entry name" value="LRR"/>
    <property type="match status" value="15"/>
</dbReference>